<feature type="signal peptide" evidence="5">
    <location>
        <begin position="1"/>
        <end position="22"/>
    </location>
</feature>
<feature type="chain" id="PRO_0000024530" description="Circumsporozoite protein" evidence="5">
    <location>
        <begin position="23"/>
        <end position="340"/>
    </location>
</feature>
<feature type="chain" id="PRO_0000455494" description="Circumsporozoite protein C-terminus" evidence="3">
    <location>
        <begin status="unknown"/>
        <end position="340"/>
    </location>
</feature>
<feature type="propeptide" id="PRO_0000455495" description="Removed in mature form" evidence="5">
    <location>
        <begin position="341"/>
        <end position="363"/>
    </location>
</feature>
<feature type="repeat" description="1; approximate" evidence="11">
    <location>
        <begin position="98"/>
        <end position="109"/>
    </location>
</feature>
<feature type="repeat" description="2" evidence="11">
    <location>
        <begin position="110"/>
        <end position="121"/>
    </location>
</feature>
<feature type="repeat" description="3" evidence="11">
    <location>
        <begin position="122"/>
        <end position="133"/>
    </location>
</feature>
<feature type="repeat" description="4" evidence="11">
    <location>
        <begin position="134"/>
        <end position="145"/>
    </location>
</feature>
<feature type="repeat" description="5" evidence="11">
    <location>
        <begin position="146"/>
        <end position="157"/>
    </location>
</feature>
<feature type="repeat" description="6" evidence="11">
    <location>
        <begin position="158"/>
        <end position="169"/>
    </location>
</feature>
<feature type="repeat" description="7" evidence="11">
    <location>
        <begin position="170"/>
        <end position="181"/>
    </location>
</feature>
<feature type="repeat" description="8" evidence="11">
    <location>
        <begin position="182"/>
        <end position="193"/>
    </location>
</feature>
<feature type="repeat" description="9" evidence="11">
    <location>
        <begin position="194"/>
        <end position="205"/>
    </location>
</feature>
<feature type="repeat" description="10" evidence="11">
    <location>
        <begin position="206"/>
        <end position="217"/>
    </location>
</feature>
<feature type="repeat" description="11" evidence="11">
    <location>
        <begin position="218"/>
        <end position="229"/>
    </location>
</feature>
<feature type="repeat" description="12" evidence="11">
    <location>
        <begin position="230"/>
        <end position="241"/>
    </location>
</feature>
<feature type="domain" description="TSP type-1" evidence="6">
    <location>
        <begin position="289"/>
        <end position="341"/>
    </location>
</feature>
<feature type="region of interest" description="Disordered" evidence="7">
    <location>
        <begin position="48"/>
        <end position="278"/>
    </location>
</feature>
<feature type="region of interest" description="Required for the binding to heparan sulfate proteoglycans (HSPGs) on the surface of host hepatocytes" evidence="4">
    <location>
        <begin position="80"/>
        <end position="88"/>
    </location>
</feature>
<feature type="region of interest" description="Region I; contains the proteolytic cleavage site" evidence="3">
    <location>
        <begin position="93"/>
        <end position="97"/>
    </location>
</feature>
<feature type="region of interest" description="12 X 12 AA approximate tandem repeats of N-A-G-Q-P-Q-A-Q-G-D-G-A" evidence="11">
    <location>
        <begin position="98"/>
        <end position="241"/>
    </location>
</feature>
<feature type="compositionally biased region" description="Polar residues" evidence="7">
    <location>
        <begin position="48"/>
        <end position="57"/>
    </location>
</feature>
<feature type="compositionally biased region" description="Basic and acidic residues" evidence="7">
    <location>
        <begin position="61"/>
        <end position="96"/>
    </location>
</feature>
<feature type="compositionally biased region" description="Gly residues" evidence="7">
    <location>
        <begin position="248"/>
        <end position="259"/>
    </location>
</feature>
<feature type="compositionally biased region" description="Low complexity" evidence="7">
    <location>
        <begin position="260"/>
        <end position="277"/>
    </location>
</feature>
<feature type="lipid moiety-binding region" description="GPI-anchor amidated cysteine" evidence="5">
    <location>
        <position position="340"/>
    </location>
</feature>
<feature type="glycosylation site" description="O-linked (Fuc) threonine" evidence="2">
    <location>
        <position position="304"/>
    </location>
</feature>
<feature type="disulfide bond" evidence="4">
    <location>
        <begin position="301"/>
        <end position="335"/>
    </location>
</feature>
<feature type="disulfide bond" evidence="4">
    <location>
        <begin position="305"/>
        <end position="340"/>
    </location>
</feature>
<organism>
    <name type="scientific">Plasmodium knowlesi (strain H)</name>
    <dbReference type="NCBI Taxonomy" id="5851"/>
    <lineage>
        <taxon>Eukaryota</taxon>
        <taxon>Sar</taxon>
        <taxon>Alveolata</taxon>
        <taxon>Apicomplexa</taxon>
        <taxon>Aconoidasida</taxon>
        <taxon>Haemosporida</taxon>
        <taxon>Plasmodiidae</taxon>
        <taxon>Plasmodium</taxon>
        <taxon>Plasmodium (Plasmodium)</taxon>
    </lineage>
</organism>
<evidence type="ECO:0000250" key="1">
    <source>
        <dbReference type="UniProtKB" id="P02893"/>
    </source>
</evidence>
<evidence type="ECO:0000250" key="2">
    <source>
        <dbReference type="UniProtKB" id="P19597"/>
    </source>
</evidence>
<evidence type="ECO:0000250" key="3">
    <source>
        <dbReference type="UniProtKB" id="P23093"/>
    </source>
</evidence>
<evidence type="ECO:0000250" key="4">
    <source>
        <dbReference type="UniProtKB" id="Q7K740"/>
    </source>
</evidence>
<evidence type="ECO:0000255" key="5"/>
<evidence type="ECO:0000255" key="6">
    <source>
        <dbReference type="PROSITE-ProRule" id="PRU00210"/>
    </source>
</evidence>
<evidence type="ECO:0000256" key="7">
    <source>
        <dbReference type="SAM" id="MobiDB-lite"/>
    </source>
</evidence>
<evidence type="ECO:0000269" key="8">
    <source>
    </source>
</evidence>
<evidence type="ECO:0000303" key="9">
    <source>
    </source>
</evidence>
<evidence type="ECO:0000305" key="10"/>
<evidence type="ECO:0000305" key="11">
    <source>
    </source>
</evidence>
<proteinExistence type="evidence at transcript level"/>
<protein>
    <recommendedName>
        <fullName evidence="9">Circumsporozoite protein</fullName>
        <shortName evidence="9">CS</shortName>
    </recommendedName>
    <component>
        <recommendedName>
            <fullName evidence="10">Circumsporozoite protein C-terminus</fullName>
        </recommendedName>
    </component>
</protein>
<accession>P02894</accession>
<comment type="function">
    <text evidence="1 3">Essential sporozoite protein (By similarity). In the mosquito vector, required for sporozoite development in the oocyst, migration through the vector hemolymph and entry into the vector salivary glands (By similarity). In the vertebrate host, required for sporozoite migration through the host dermis and infection of host hepatocytes (By similarity). Binds to highly sulfated heparan sulfate proteoglycans (HSPGs) on the surface of host hepatocytes (By similarity).</text>
</comment>
<comment type="function">
    <molecule>Circumsporozoite protein C-terminus</molecule>
    <text evidence="3">In the vertebrate host, binds to highly sulfated heparan sulfate proteoglycans (HSPGs) on the surface of host hepatocytes and is required for sporozoite invasion of the host hepatocytes.</text>
</comment>
<comment type="subcellular location">
    <subcellularLocation>
        <location evidence="2">Cell membrane</location>
        <topology evidence="5">Lipid-anchor</topology>
        <topology evidence="5">GPI-anchor</topology>
    </subcellularLocation>
    <subcellularLocation>
        <location evidence="3">Cytoplasm</location>
    </subcellularLocation>
    <text evidence="3">Localizes to the cytoplasm and the cell membrane in oocysts at day 6 post infection and then gradually distributes over the entire cell surface of the sporoblast and the budding sporozoites.</text>
</comment>
<comment type="domain">
    <text evidence="3 4">The N-terminus is involved in the initial binding to heparan sulfate proteoglycans (HSPGs) on the surface of host hepatocytes (By similarity). The N-terminus masks the TSP type-1 (TSR) domain which maintains the sporozoites in a migratory state, enabling them to complete their journey to the salivary gland in the mosquito vector and then to the host liver. The unmasking of the TSP type-1 (TSR) domain when the sporozoite interacts with the host hepatocyte also protects sporozoites from host antibodies (By similarity).</text>
</comment>
<comment type="domain">
    <text evidence="3">The TSP type-1 (TSR) domain is required for sporozoite development and invasion. CSP has two conformational states, an adhesive conformation in which the TSP type-1 (TSR) domain is exposed and a nonadhesive conformation in which the TSR is masked by the N-terminus. TSR-exposed conformation occurs during sporozoite development in the oocyst in the mosquito vector and during host hepatocyte invasion. TSR-masked conformation occurs during sporozoite migration through the hemolymph to salivary glands in the mosquito vector and in the host dermis.</text>
</comment>
<comment type="domain">
    <text evidence="3">The GPI-anchor is essential for cell membrane localization and for sporozoite formation inside the oocyst.</text>
</comment>
<comment type="PTM">
    <text evidence="1 3">During host cell invasion, proteolytically cleaved at the cell membrane in the region I by a papain-like cysteine protease of parasite origin (By similarity). Cleavage is triggered by the sporozoite contact with highly sulfated heparan sulfate proteoglycans (HSPGs) present on the host hepatocyte cell surface (By similarity). Cleavage exposes the TSP type-1 (TSR) domain and is required for productive invasion of host hepatocytes but not for adhesion to the host cell membrane (By similarity). Cleavage is dispensable for sporozoite development in the oocyst, motility and for traversal of host and vector cells (By similarity).</text>
</comment>
<comment type="PTM">
    <text evidence="2">O-glycosylated; maybe by POFUT2.</text>
</comment>
<comment type="polymorphism">
    <text evidence="8">The sequence of the repeats varies across Plasmodium species and strains.</text>
</comment>
<comment type="similarity">
    <text evidence="10">Belongs to the plasmodium circumsporozoite protein family.</text>
</comment>
<reference key="1">
    <citation type="journal article" date="1983" name="Cell">
        <title>Structure of the plasmodium knowlesi gene coding for the circumsporozoite protein.</title>
        <authorList>
            <person name="Ozaki L.S."/>
            <person name="Svec P."/>
            <person name="Nussenzweig R.S."/>
            <person name="Nussenzweig V."/>
            <person name="Godson G.N."/>
        </authorList>
    </citation>
    <scope>NUCLEOTIDE SEQUENCE [GENOMIC DNA]</scope>
    <scope>POLYMORPHISM</scope>
    <scope>REPEATS</scope>
</reference>
<reference key="2">
    <citation type="journal article" date="1983" name="Nature">
        <title>Identification and chemical synthesis of a tandemly repeated immunogenic region of Plasmodium knowlesi circumsporozoite protein.</title>
        <authorList>
            <person name="Godson G.N."/>
            <person name="Ellis J."/>
            <person name="Svec P."/>
            <person name="Schlesinger D.H."/>
            <person name="Nussenzweig V."/>
        </authorList>
    </citation>
    <scope>NUCLEOTIDE SEQUENCE [MRNA] OF 84-258</scope>
</reference>
<gene>
    <name evidence="3" type="primary">CSP</name>
</gene>
<sequence>MKNFILLAVSSILLVDLLPTHFEHNVDLSRAINVNGVSFNNVDTSSLGAQQVRQSASRGRGLGEKPKEGADKEKKKEKGKEKEEEPKKPNENKLKQPNEGQPQAQGDGANAGQPQAQGDGANAGQPQAQGDGANAGQPQAQGDGANAGQPQAQGDGANAGQPQAQGDGANAGQPQAQGDGANAGQPQAQGDGANAGQPQAQGDGANAGQPQAQGDGANAGQPQAQGDGANAGQPQAQGDGANVPRQGRNGGGAPAGGNEGNKQAGKGQGQNNQGANAPNEKVVNDYLHKIRSSVTTEWTPCSVTCGNGVRIRRKAHAGNKKAEDLTMDDLEVEACVMDKCAGIFNVVSNSLGLVILLVLALFN</sequence>
<dbReference type="EMBL" id="K00822">
    <property type="protein sequence ID" value="AAA19699.1"/>
    <property type="molecule type" value="Genomic_DNA"/>
</dbReference>
<dbReference type="EMBL" id="K00772">
    <property type="protein sequence ID" value="AAA29556.1"/>
    <property type="molecule type" value="mRNA"/>
</dbReference>
<dbReference type="PIR" id="A90841">
    <property type="entry name" value="OZZQAK"/>
</dbReference>
<dbReference type="SMR" id="P02894"/>
<dbReference type="GlyCosmos" id="P02894">
    <property type="glycosylation" value="1 site, No reported glycans"/>
</dbReference>
<dbReference type="GO" id="GO:0009986">
    <property type="term" value="C:cell surface"/>
    <property type="evidence" value="ECO:0007669"/>
    <property type="project" value="InterPro"/>
</dbReference>
<dbReference type="GO" id="GO:0005737">
    <property type="term" value="C:cytoplasm"/>
    <property type="evidence" value="ECO:0007669"/>
    <property type="project" value="UniProtKB-SubCell"/>
</dbReference>
<dbReference type="GO" id="GO:0005886">
    <property type="term" value="C:plasma membrane"/>
    <property type="evidence" value="ECO:0007669"/>
    <property type="project" value="UniProtKB-SubCell"/>
</dbReference>
<dbReference type="GO" id="GO:0098552">
    <property type="term" value="C:side of membrane"/>
    <property type="evidence" value="ECO:0007669"/>
    <property type="project" value="UniProtKB-KW"/>
</dbReference>
<dbReference type="Gene3D" id="2.20.100.10">
    <property type="entry name" value="Thrombospondin type-1 (TSP1) repeat"/>
    <property type="match status" value="1"/>
</dbReference>
<dbReference type="InterPro" id="IPR003067">
    <property type="entry name" value="Crcmsprzoite"/>
</dbReference>
<dbReference type="InterPro" id="IPR000884">
    <property type="entry name" value="TSP1_rpt"/>
</dbReference>
<dbReference type="InterPro" id="IPR036383">
    <property type="entry name" value="TSP1_rpt_sf"/>
</dbReference>
<dbReference type="Pfam" id="PF00090">
    <property type="entry name" value="TSP_1"/>
    <property type="match status" value="1"/>
</dbReference>
<dbReference type="PRINTS" id="PR01303">
    <property type="entry name" value="CRCMSPRZOITE"/>
</dbReference>
<dbReference type="SMART" id="SM00209">
    <property type="entry name" value="TSP1"/>
    <property type="match status" value="1"/>
</dbReference>
<dbReference type="SUPFAM" id="SSF82895">
    <property type="entry name" value="TSP-1 type 1 repeat"/>
    <property type="match status" value="1"/>
</dbReference>
<dbReference type="PROSITE" id="PS50092">
    <property type="entry name" value="TSP1"/>
    <property type="match status" value="1"/>
</dbReference>
<name>CSP_PLAKH</name>
<keyword id="KW-1003">Cell membrane</keyword>
<keyword id="KW-0963">Cytoplasm</keyword>
<keyword id="KW-1015">Disulfide bond</keyword>
<keyword id="KW-0325">Glycoprotein</keyword>
<keyword id="KW-0336">GPI-anchor</keyword>
<keyword id="KW-0449">Lipoprotein</keyword>
<keyword id="KW-0461">Malaria</keyword>
<keyword id="KW-0472">Membrane</keyword>
<keyword id="KW-0677">Repeat</keyword>
<keyword id="KW-0732">Signal</keyword>
<keyword id="KW-0748">Sporozoite</keyword>